<feature type="chain" id="PRO_0000203919" description="Tagatose-6-phosphate kinase">
    <location>
        <begin position="1"/>
        <end position="310"/>
    </location>
</feature>
<sequence length="310" mass="33853">MILTLTLNPSVDISYPLTALKLDDVNRVQEVSKTAGGKGLNVTRVLAQVGEPVLASGFIGGELGQFIAKKLDHADIKHAFYNIKGETRNCIAILHEGQQTEILEQGPEIDNQEAAGFIKHFEQLLEKVEAVAISGSLPKGLNQDYYAQIIERCQNKGVPVILDCSGATLQTVLENPYKPTVIKPNISELYQLLNQPLDESLESLKQAVSQPLFEGIEWIIVSLGAQGAFAKHNHTFYRVNIPTISVLNPVGSGDSTVAGITSAILNHENDHDLLKKANTLGMLNAQEAQTGYVNLNNYDDLFNQIEVLEV</sequence>
<evidence type="ECO:0000255" key="1">
    <source>
        <dbReference type="HAMAP-Rule" id="MF_01557"/>
    </source>
</evidence>
<comment type="catalytic activity">
    <reaction evidence="1">
        <text>D-tagatofuranose 6-phosphate + ATP = D-tagatofuranose 1,6-bisphosphate + ADP + H(+)</text>
        <dbReference type="Rhea" id="RHEA:12420"/>
        <dbReference type="ChEBI" id="CHEBI:15378"/>
        <dbReference type="ChEBI" id="CHEBI:30616"/>
        <dbReference type="ChEBI" id="CHEBI:58694"/>
        <dbReference type="ChEBI" id="CHEBI:58695"/>
        <dbReference type="ChEBI" id="CHEBI:456216"/>
        <dbReference type="EC" id="2.7.1.144"/>
    </reaction>
</comment>
<comment type="pathway">
    <text evidence="1">Carbohydrate metabolism; D-tagatose 6-phosphate degradation; D-glyceraldehyde 3-phosphate and glycerone phosphate from D-tagatose 6-phosphate: step 1/2.</text>
</comment>
<comment type="similarity">
    <text evidence="1">Belongs to the carbohydrate kinase PfkB family. LacC subfamily.</text>
</comment>
<accession>Q6G7C1</accession>
<name>LACC_STAAS</name>
<reference key="1">
    <citation type="journal article" date="2004" name="Proc. Natl. Acad. Sci. U.S.A.">
        <title>Complete genomes of two clinical Staphylococcus aureus strains: evidence for the rapid evolution of virulence and drug resistance.</title>
        <authorList>
            <person name="Holden M.T.G."/>
            <person name="Feil E.J."/>
            <person name="Lindsay J.A."/>
            <person name="Peacock S.J."/>
            <person name="Day N.P.J."/>
            <person name="Enright M.C."/>
            <person name="Foster T.J."/>
            <person name="Moore C.E."/>
            <person name="Hurst L."/>
            <person name="Atkin R."/>
            <person name="Barron A."/>
            <person name="Bason N."/>
            <person name="Bentley S.D."/>
            <person name="Chillingworth C."/>
            <person name="Chillingworth T."/>
            <person name="Churcher C."/>
            <person name="Clark L."/>
            <person name="Corton C."/>
            <person name="Cronin A."/>
            <person name="Doggett J."/>
            <person name="Dowd L."/>
            <person name="Feltwell T."/>
            <person name="Hance Z."/>
            <person name="Harris B."/>
            <person name="Hauser H."/>
            <person name="Holroyd S."/>
            <person name="Jagels K."/>
            <person name="James K.D."/>
            <person name="Lennard N."/>
            <person name="Line A."/>
            <person name="Mayes R."/>
            <person name="Moule S."/>
            <person name="Mungall K."/>
            <person name="Ormond D."/>
            <person name="Quail M.A."/>
            <person name="Rabbinowitsch E."/>
            <person name="Rutherford K.M."/>
            <person name="Sanders M."/>
            <person name="Sharp S."/>
            <person name="Simmonds M."/>
            <person name="Stevens K."/>
            <person name="Whitehead S."/>
            <person name="Barrell B.G."/>
            <person name="Spratt B.G."/>
            <person name="Parkhill J."/>
        </authorList>
    </citation>
    <scope>NUCLEOTIDE SEQUENCE [LARGE SCALE GENOMIC DNA]</scope>
    <source>
        <strain>MSSA476</strain>
    </source>
</reference>
<protein>
    <recommendedName>
        <fullName evidence="1">Tagatose-6-phosphate kinase</fullName>
        <ecNumber evidence="1">2.7.1.144</ecNumber>
    </recommendedName>
    <alternativeName>
        <fullName evidence="1">Phosphotagatokinase</fullName>
    </alternativeName>
</protein>
<organism>
    <name type="scientific">Staphylococcus aureus (strain MSSA476)</name>
    <dbReference type="NCBI Taxonomy" id="282459"/>
    <lineage>
        <taxon>Bacteria</taxon>
        <taxon>Bacillati</taxon>
        <taxon>Bacillota</taxon>
        <taxon>Bacilli</taxon>
        <taxon>Bacillales</taxon>
        <taxon>Staphylococcaceae</taxon>
        <taxon>Staphylococcus</taxon>
    </lineage>
</organism>
<dbReference type="EC" id="2.7.1.144" evidence="1"/>
<dbReference type="EMBL" id="BX571857">
    <property type="protein sequence ID" value="CAG43902.1"/>
    <property type="molecule type" value="Genomic_DNA"/>
</dbReference>
<dbReference type="RefSeq" id="WP_000604135.1">
    <property type="nucleotide sequence ID" value="NC_002953.3"/>
</dbReference>
<dbReference type="SMR" id="Q6G7C1"/>
<dbReference type="KEGG" id="sas:SAS2094"/>
<dbReference type="HOGENOM" id="CLU_050013_5_0_9"/>
<dbReference type="UniPathway" id="UPA00704">
    <property type="reaction ID" value="UER00715"/>
</dbReference>
<dbReference type="GO" id="GO:0005829">
    <property type="term" value="C:cytosol"/>
    <property type="evidence" value="ECO:0007669"/>
    <property type="project" value="TreeGrafter"/>
</dbReference>
<dbReference type="GO" id="GO:0005524">
    <property type="term" value="F:ATP binding"/>
    <property type="evidence" value="ECO:0007669"/>
    <property type="project" value="UniProtKB-KW"/>
</dbReference>
<dbReference type="GO" id="GO:0008443">
    <property type="term" value="F:phosphofructokinase activity"/>
    <property type="evidence" value="ECO:0007669"/>
    <property type="project" value="TreeGrafter"/>
</dbReference>
<dbReference type="GO" id="GO:0009024">
    <property type="term" value="F:tagatose-6-phosphate kinase activity"/>
    <property type="evidence" value="ECO:0007669"/>
    <property type="project" value="UniProtKB-UniRule"/>
</dbReference>
<dbReference type="GO" id="GO:2001059">
    <property type="term" value="P:D-tagatose 6-phosphate catabolic process"/>
    <property type="evidence" value="ECO:0007669"/>
    <property type="project" value="UniProtKB-UniRule"/>
</dbReference>
<dbReference type="GO" id="GO:0019512">
    <property type="term" value="P:lactose catabolic process via tagatose-6-phosphate"/>
    <property type="evidence" value="ECO:0007669"/>
    <property type="project" value="InterPro"/>
</dbReference>
<dbReference type="CDD" id="cd01164">
    <property type="entry name" value="FruK_PfkB_like"/>
    <property type="match status" value="1"/>
</dbReference>
<dbReference type="FunFam" id="3.40.1190.20:FF:000001">
    <property type="entry name" value="Phosphofructokinase"/>
    <property type="match status" value="1"/>
</dbReference>
<dbReference type="Gene3D" id="3.40.1190.20">
    <property type="match status" value="1"/>
</dbReference>
<dbReference type="HAMAP" id="MF_01557">
    <property type="entry name" value="LacC"/>
    <property type="match status" value="1"/>
</dbReference>
<dbReference type="InterPro" id="IPR002173">
    <property type="entry name" value="Carboh/pur_kinase_PfkB_CS"/>
</dbReference>
<dbReference type="InterPro" id="IPR005926">
    <property type="entry name" value="LacC"/>
</dbReference>
<dbReference type="InterPro" id="IPR011611">
    <property type="entry name" value="PfkB_dom"/>
</dbReference>
<dbReference type="InterPro" id="IPR029056">
    <property type="entry name" value="Ribokinase-like"/>
</dbReference>
<dbReference type="InterPro" id="IPR017583">
    <property type="entry name" value="Tagatose/fructose_Pkinase"/>
</dbReference>
<dbReference type="NCBIfam" id="TIGR03168">
    <property type="entry name" value="1-PFK"/>
    <property type="match status" value="1"/>
</dbReference>
<dbReference type="NCBIfam" id="TIGR01231">
    <property type="entry name" value="lacC"/>
    <property type="match status" value="1"/>
</dbReference>
<dbReference type="NCBIfam" id="NF010033">
    <property type="entry name" value="PRK13508.1"/>
    <property type="match status" value="1"/>
</dbReference>
<dbReference type="PANTHER" id="PTHR46566:SF5">
    <property type="entry name" value="1-PHOSPHOFRUCTOKINASE"/>
    <property type="match status" value="1"/>
</dbReference>
<dbReference type="PANTHER" id="PTHR46566">
    <property type="entry name" value="1-PHOSPHOFRUCTOKINASE-RELATED"/>
    <property type="match status" value="1"/>
</dbReference>
<dbReference type="Pfam" id="PF00294">
    <property type="entry name" value="PfkB"/>
    <property type="match status" value="1"/>
</dbReference>
<dbReference type="PIRSF" id="PIRSF000535">
    <property type="entry name" value="1PFK/6PFK/LacC"/>
    <property type="match status" value="1"/>
</dbReference>
<dbReference type="SUPFAM" id="SSF53613">
    <property type="entry name" value="Ribokinase-like"/>
    <property type="match status" value="1"/>
</dbReference>
<dbReference type="PROSITE" id="PS00583">
    <property type="entry name" value="PFKB_KINASES_1"/>
    <property type="match status" value="1"/>
</dbReference>
<dbReference type="PROSITE" id="PS00584">
    <property type="entry name" value="PFKB_KINASES_2"/>
    <property type="match status" value="1"/>
</dbReference>
<proteinExistence type="inferred from homology"/>
<gene>
    <name evidence="1" type="primary">lacC</name>
    <name type="ordered locus">SAS2094</name>
</gene>
<keyword id="KW-0067">ATP-binding</keyword>
<keyword id="KW-0418">Kinase</keyword>
<keyword id="KW-0423">Lactose metabolism</keyword>
<keyword id="KW-0547">Nucleotide-binding</keyword>
<keyword id="KW-0808">Transferase</keyword>